<accession>Q887C9</accession>
<accession>O66101</accession>
<accession>Q7BM43</accession>
<reference key="1">
    <citation type="journal article" date="1998" name="Proc. Natl. Acad. Sci. U.S.A.">
        <title>Homology and functional similarity of an hrp-linked pathogenicity locus, dspEF, of Erwinia amylovora and the avirulence locus avrE of Pseudomonas syringae pathovar tomato.</title>
        <authorList>
            <person name="Bogdanove A.J."/>
            <person name="Kim J.F."/>
            <person name="Wei Z."/>
            <person name="Kolchinsky P."/>
            <person name="Charkowski A.O."/>
            <person name="Conlin A.K."/>
            <person name="Collmer A."/>
            <person name="Beer S.V."/>
        </authorList>
    </citation>
    <scope>NUCLEOTIDE SEQUENCE [GENOMIC DNA]</scope>
    <source>
        <strain>ATCC BAA-871 / DC3000</strain>
    </source>
</reference>
<reference key="2">
    <citation type="journal article" date="2000" name="Proc. Natl. Acad. Sci. U.S.A.">
        <title>The Pseudomonas syringae Hrp pathogenicity island has a tripartite mosaic structure composed of a cluster of type III secretion genes bounded by exchangeable effector and conserved effector loci that contribute to parasitic fitness and pathogenicity in plants.</title>
        <authorList>
            <person name="Alfano J.R."/>
            <person name="Charkowski A.O."/>
            <person name="Deng W.-L."/>
            <person name="Badel J.L."/>
            <person name="Petnicki-Ocwieja T."/>
            <person name="van Dijk K."/>
            <person name="Collmer A."/>
        </authorList>
    </citation>
    <scope>NUCLEOTIDE SEQUENCE [GENOMIC DNA]</scope>
    <source>
        <strain>ATCC BAA-871 / DC3000</strain>
    </source>
</reference>
<reference key="3">
    <citation type="journal article" date="2003" name="Proc. Natl. Acad. Sci. U.S.A.">
        <title>The complete genome sequence of the Arabidopsis and tomato pathogen Pseudomonas syringae pv. tomato DC3000.</title>
        <authorList>
            <person name="Buell C.R."/>
            <person name="Joardar V."/>
            <person name="Lindeberg M."/>
            <person name="Selengut J."/>
            <person name="Paulsen I.T."/>
            <person name="Gwinn M.L."/>
            <person name="Dodson R.J."/>
            <person name="DeBoy R.T."/>
            <person name="Durkin A.S."/>
            <person name="Kolonay J.F."/>
            <person name="Madupu R."/>
            <person name="Daugherty S.C."/>
            <person name="Brinkac L.M."/>
            <person name="Beanan M.J."/>
            <person name="Haft D.H."/>
            <person name="Nelson W.C."/>
            <person name="Davidsen T.M."/>
            <person name="Zafar N."/>
            <person name="Zhou L."/>
            <person name="Liu J."/>
            <person name="Yuan Q."/>
            <person name="Khouri H.M."/>
            <person name="Fedorova N.B."/>
            <person name="Tran B."/>
            <person name="Russell D."/>
            <person name="Berry K.J."/>
            <person name="Utterback T.R."/>
            <person name="Van Aken S.E."/>
            <person name="Feldblyum T.V."/>
            <person name="D'Ascenzo M."/>
            <person name="Deng W.-L."/>
            <person name="Ramos A.R."/>
            <person name="Alfano J.R."/>
            <person name="Cartinhour S."/>
            <person name="Chatterjee A.K."/>
            <person name="Delaney T.P."/>
            <person name="Lazarowitz S.G."/>
            <person name="Martin G.B."/>
            <person name="Schneider D.J."/>
            <person name="Tang X."/>
            <person name="Bender C.L."/>
            <person name="White O."/>
            <person name="Fraser C.M."/>
            <person name="Collmer A."/>
        </authorList>
    </citation>
    <scope>NUCLEOTIDE SEQUENCE [LARGE SCALE GENOMIC DNA]</scope>
    <source>
        <strain>ATCC BAA-871 / DC3000</strain>
    </source>
</reference>
<reference key="4">
    <citation type="journal article" date="2006" name="Mol. Plant Microbe Interact.">
        <title>A Pseudomonas syringae pv. tomato avrE1/hopM1 mutant is severely reduced in growth and lesion formation in tomato.</title>
        <authorList>
            <person name="Badel J.L."/>
            <person name="Shimizu R."/>
            <person name="Oh H.-S."/>
            <person name="Collmer A."/>
        </authorList>
    </citation>
    <scope>FUNCTION IN VIRULENCE</scope>
    <scope>SUBCELLULAR LOCATION</scope>
    <scope>DISRUPTION PHENOTYPE</scope>
    <source>
        <strain>ATCC BAA-871 / DC3000</strain>
    </source>
</reference>
<reference key="5">
    <citation type="journal article" date="2009" name="Mol. Plant Microbe Interact.">
        <title>Multiple activities of the plant pathogen type III effector proteins WtsE and AvrE require WxxxE motifs.</title>
        <authorList>
            <person name="Ham J.H."/>
            <person name="Majerczak D.R."/>
            <person name="Nomura K."/>
            <person name="Mecey C."/>
            <person name="Uribe F."/>
            <person name="He S.Y."/>
            <person name="Mackey D."/>
            <person name="Coplin D.L."/>
        </authorList>
    </citation>
    <scope>DOMAIN</scope>
    <scope>MUTAGENESIS OF TRP-393; GLU-397; TRP-829; GLU-833 AND 1787-LYS-LYS-1788</scope>
    <source>
        <strain>ATCC BAA-871 / DC3000</strain>
    </source>
</reference>
<reference key="6">
    <citation type="journal article" date="2015" name="Plant Physiol.">
        <title>Pseudomonas syringae effector avirulence protein E Localizes to the host plasma membrane and down-regulates the expression of the NONRACE-SPECIFIC DISEASE RESISTANCE1/HARPIN-INDUCED1-LIKE13 gene required for antibacterial immunity in arabidopsis.</title>
        <authorList>
            <person name="Xin X.F."/>
            <person name="Nomura K."/>
            <person name="Ding X."/>
            <person name="Chen X."/>
            <person name="Wang K."/>
            <person name="Aung K."/>
            <person name="Uribe F."/>
            <person name="Rosa B."/>
            <person name="Yao J."/>
            <person name="Chen J."/>
            <person name="He S.Y."/>
        </authorList>
    </citation>
    <scope>FUNCTION</scope>
    <scope>SUBCELLULAR LOCATION</scope>
    <scope>DOMAIN</scope>
    <source>
        <strain>ATCC BAA-871 / DC3000</strain>
    </source>
</reference>
<reference key="7">
    <citation type="journal article" date="2016" name="PLoS Pathog.">
        <title>Direct and indirect targeting of PP2A by conserved bacterial type-III effector proteins.</title>
        <authorList>
            <person name="Jin L."/>
            <person name="Ham J.H."/>
            <person name="Hage R."/>
            <person name="Zhao W."/>
            <person name="Soto-Hernandez J."/>
            <person name="Lee S.Y."/>
            <person name="Paek S.M."/>
            <person name="Kim M.G."/>
            <person name="Boone C."/>
            <person name="Coplin D.L."/>
            <person name="Mackey D."/>
        </authorList>
    </citation>
    <scope>INTERACTION WITH A.THALIANA PP2A</scope>
    <scope>SUBCELLULAR LOCATION</scope>
    <scope>MUTAGENESIS OF 1787-LYS-LYS-1788</scope>
</reference>
<reference key="8">
    <citation type="journal article" date="2023" name="Nature">
        <title>Bacterial pathogens deliver water- and solute-permeable channels to plant cells.</title>
        <authorList>
            <person name="Nomura K."/>
            <person name="Andreazza F."/>
            <person name="Cheng J."/>
            <person name="Dong K."/>
            <person name="Zhou P."/>
            <person name="He S.Y."/>
        </authorList>
    </citation>
    <scope>FUNCTION AS A CHANNEL</scope>
    <scope>ACTIVITY REGULATION</scope>
    <source>
        <strain>ATCC BAA-871 / DC3000</strain>
    </source>
</reference>
<protein>
    <recommendedName>
        <fullName evidence="10">Type III effector AvrE</fullName>
    </recommendedName>
    <alternativeName>
        <fullName evidence="8">Avirulence protein E</fullName>
    </alternativeName>
</protein>
<organism>
    <name type="scientific">Pseudomonas syringae pv. tomato (strain ATCC BAA-871 / DC3000)</name>
    <dbReference type="NCBI Taxonomy" id="223283"/>
    <lineage>
        <taxon>Bacteria</taxon>
        <taxon>Pseudomonadati</taxon>
        <taxon>Pseudomonadota</taxon>
        <taxon>Gammaproteobacteria</taxon>
        <taxon>Pseudomonadales</taxon>
        <taxon>Pseudomonadaceae</taxon>
        <taxon>Pseudomonas</taxon>
    </lineage>
</organism>
<sequence length="1795" mass="195150">MQSPSIHRNTGSIIQPTVTPDARAATDLQERAEQPRQRSSHSLSSVGKRALKSVGKLFQKSKAPQQKAATPPTAKNVKTPPPASNVATPRNKARESGFSNSSPQNTHSAPKSILRNHPNQASSSGAQTHEIHPEAAPRKNLRVRFDLPQDRLERSPSYLDSDNPMTDEEAVANATRQFRSPDSHLQGSDGTRISMLATDPDQPSSSGSKIGDSDGPIPPREPMLWRSNGGRFELKDEKLVRNSEPQGSIQLDAKGKPDFSTFNTPGLAPLLDSILATPKQTYLAHQSKDGVHGHQLLQANGHLLHLAQDDSSLAVIRSSNEALLIEGKKPPAVKMEREDGNIHIDTASGRKTQELPGKAHIAHITNVLLSHDGERMRVHEDRLYQFDPISTRWKIPEGLEDTAFNSLSTGGNGSVYAKSDDAVVDLSSPFMPHVEVEDLQSFSVAPDNRAALLSGKTTQAILLTDMSPVIGGLTPKKTKGLELDGGKAQAAAVGLSGDKLFIADTQGRLYSADRSAFEGDDPKLKLMPEQANFQLEGVPLGGHNRVTGFINGDDGGVHALIKNRQGETHSHALDEQSSKLQSGWNLTNALVLNNNRGLTMPPPPTAADRLNLDRAGLVGLSEGRIQRWDATPECWKDAGIKDIDRLQRGADSNAYVLKGGKLHALKIAAEHPNMAFDRNTALAQTARSTKVEMGKEIEGLDDRVIKAFAMVSNKRFVALDDQNKLTAHSKDHKPVTLDIPGLEGDIKSLSLDEKHNLHALTSTGGLYCLPKEAWQSTKLGDQLRARWTPVALPGGQPVKALFTNDDNVLSAQIEDAEGKGLMQLKAGQWQRFEQRPVEENGLNDVHSRITGSNKTWRIPKTGLTLRMDVNTFGRSGVEKSKKASTSEFIRANIYKNTAETPRWMKNVGDHIQHRYQGRLGLKEVYETESMLFKQLELIHESGGRPPARGQDLKARITALEAKLGPQGATLVKELETLRDELENHSYTALMSIGQSYGKAKNLKQQDGILNQHGELAKPSVRMQFGKKLADLGTKLNFKSSGHDLVKELQDALTQVAPSAENPTKKLLGTLKHQGLKLSHQKADIPLGQRRDASEDHGLSKARLALDLVTLKSLGALLDQVEQLPPQSDIEPLQKKLATLRDVTYGENPVKVVTDMGFTDNKALESGYESVKTFLKSFKKADHAVSVNMRAATGSKDQAELAGKFKSMLKQLEHGDDEVGLQRSYGVNLTTPFIILADKATGLWPTAGATGNRNYILNAERCEGGVTLYLISEGAGNVSGGFGAGKDYWPGFFDANNPARSVDVGNNRTLTPNFRLGVDVTATVAASQRAGVVFNVPDEDIDAFVDDLFEGQLNPLQVLKKAVDHESYEARRFNFDLTAGGTADIRAGINLTEDRDPNADPNSDSFSAVVRGGFAANITVNLMTYTDYSLTQKNDKTELKEGGKNRPRFLNNVTAGGQLRAQIGGSHTAPTGTPASAPGPTPASQTAANNLGGALNFSVENRTVKRIKFRYNVAKPITTEGLSKLSKGLGEAFLDNTTKAKLAELADPLNARYTGKKPDEVIQAQLDGLEELFADIPPPKDNDKQYKALRDLKRAAVEHRASANKHSVMDNARFETSKTNLSGLSSESILTKIMSSVRDASAPGNATRVAEFMRQDPKLRAMLKEMEGSIGTLARVRLEPKDSLVDKIDEGSLNGTMTQSDLSSMLEDRNEMRIKRLVVFHTATQAENFTSPTPLVSYNSGANVSVTKTLGRINFVYGADQDKPIGYTFDGELSRPSASLKEAAGDLKKEGFELKS</sequence>
<keyword id="KW-1032">Host cell membrane</keyword>
<keyword id="KW-1043">Host membrane</keyword>
<keyword id="KW-0472">Membrane</keyword>
<keyword id="KW-1185">Reference proteome</keyword>
<keyword id="KW-0964">Secreted</keyword>
<keyword id="KW-0843">Virulence</keyword>
<feature type="chain" id="PRO_0000459496" description="Type III effector AvrE">
    <location>
        <begin position="1"/>
        <end position="1795"/>
    </location>
</feature>
<feature type="region of interest" description="Disordered" evidence="1">
    <location>
        <begin position="1"/>
        <end position="227"/>
    </location>
</feature>
<feature type="region of interest" description="Disordered" evidence="1">
    <location>
        <begin position="1461"/>
        <end position="1488"/>
    </location>
</feature>
<feature type="short sequence motif" description="WxxxE 1" evidence="11">
    <location>
        <begin position="393"/>
        <end position="397"/>
    </location>
</feature>
<feature type="short sequence motif" description="WxxxE 2" evidence="11">
    <location>
        <begin position="829"/>
        <end position="833"/>
    </location>
</feature>
<feature type="short sequence motif" description="ERMRS" evidence="11">
    <location>
        <begin position="1787"/>
        <end position="1790"/>
    </location>
</feature>
<feature type="compositionally biased region" description="Polar residues" evidence="1">
    <location>
        <begin position="1"/>
        <end position="18"/>
    </location>
</feature>
<feature type="compositionally biased region" description="Low complexity" evidence="1">
    <location>
        <begin position="60"/>
        <end position="75"/>
    </location>
</feature>
<feature type="compositionally biased region" description="Polar residues" evidence="1">
    <location>
        <begin position="97"/>
        <end position="109"/>
    </location>
</feature>
<feature type="compositionally biased region" description="Polar residues" evidence="1">
    <location>
        <begin position="117"/>
        <end position="127"/>
    </location>
</feature>
<feature type="compositionally biased region" description="Basic and acidic residues" evidence="1">
    <location>
        <begin position="129"/>
        <end position="154"/>
    </location>
</feature>
<feature type="compositionally biased region" description="Polar residues" evidence="1">
    <location>
        <begin position="174"/>
        <end position="191"/>
    </location>
</feature>
<feature type="compositionally biased region" description="Low complexity" evidence="1">
    <location>
        <begin position="203"/>
        <end position="215"/>
    </location>
</feature>
<feature type="compositionally biased region" description="Low complexity" evidence="1">
    <location>
        <begin position="1467"/>
        <end position="1487"/>
    </location>
</feature>
<feature type="mutagenesis site" description="Defective in the virulence activity; when associated with A-829." evidence="3">
    <original>W</original>
    <variation>A</variation>
    <location>
        <position position="393"/>
    </location>
</feature>
<feature type="mutagenesis site" description="Defective in the virulence activity; when associated with A-833." evidence="3">
    <original>E</original>
    <variation>A</variation>
    <location>
        <position position="397"/>
    </location>
</feature>
<feature type="mutagenesis site" description="Defective in the virulence activity; when associated with A-393." evidence="3">
    <original>W</original>
    <variation>A</variation>
    <location>
        <position position="829"/>
    </location>
</feature>
<feature type="mutagenesis site" description="Defective in the virulence activity; when associated with A-397." evidence="3">
    <original>E</original>
    <variation>A</variation>
    <location>
        <position position="833"/>
    </location>
</feature>
<feature type="mutagenesis site" description="Defective in the virulence activity. Alters neither the subcellular distribution of the AvrE1-C fragment nor its association with PP2A." evidence="3 5">
    <original>KK</original>
    <variation>AA</variation>
    <location>
        <begin position="1787"/>
        <end position="1788"/>
    </location>
</feature>
<feature type="sequence conflict" description="In Ref. 1; AAC06134 and 2; AAF71499." evidence="10" ref="1 2">
    <original>SAPKS</original>
    <variation>RAPKW</variation>
    <location>
        <begin position="108"/>
        <end position="112"/>
    </location>
</feature>
<feature type="sequence conflict" description="In Ref. 1; AAC06134 and 2; AAF71499." evidence="10" ref="1 2">
    <original>L</original>
    <variation>F</variation>
    <location>
        <position position="303"/>
    </location>
</feature>
<evidence type="ECO:0000256" key="1">
    <source>
        <dbReference type="SAM" id="MobiDB-lite"/>
    </source>
</evidence>
<evidence type="ECO:0000269" key="2">
    <source>
    </source>
</evidence>
<evidence type="ECO:0000269" key="3">
    <source>
    </source>
</evidence>
<evidence type="ECO:0000269" key="4">
    <source>
    </source>
</evidence>
<evidence type="ECO:0000269" key="5">
    <source>
    </source>
</evidence>
<evidence type="ECO:0000269" key="6">
    <source>
    </source>
</evidence>
<evidence type="ECO:0000303" key="7">
    <source>
    </source>
</evidence>
<evidence type="ECO:0000303" key="8">
    <source>
    </source>
</evidence>
<evidence type="ECO:0000303" key="9">
    <source>
    </source>
</evidence>
<evidence type="ECO:0000305" key="10"/>
<evidence type="ECO:0000305" key="11">
    <source>
    </source>
</evidence>
<evidence type="ECO:0000312" key="12">
    <source>
        <dbReference type="EMBL" id="AAO54899.1"/>
    </source>
</evidence>
<gene>
    <name evidence="9" type="primary">avrE</name>
    <name evidence="7" type="synonym">avrE1</name>
    <name evidence="12" type="ordered locus">PSPTO_1377</name>
</gene>
<proteinExistence type="evidence at protein level"/>
<dbReference type="EMBL" id="U97505">
    <property type="protein sequence ID" value="AAC06134.1"/>
    <property type="molecule type" value="Genomic_DNA"/>
</dbReference>
<dbReference type="EMBL" id="AF232004">
    <property type="protein sequence ID" value="AAF71499.1"/>
    <property type="molecule type" value="Genomic_DNA"/>
</dbReference>
<dbReference type="EMBL" id="AE016853">
    <property type="protein sequence ID" value="AAO54899.1"/>
    <property type="molecule type" value="Genomic_DNA"/>
</dbReference>
<dbReference type="PIR" id="T30332">
    <property type="entry name" value="T30332"/>
</dbReference>
<dbReference type="RefSeq" id="NP_791204.1">
    <property type="nucleotide sequence ID" value="NC_004578.1"/>
</dbReference>
<dbReference type="RefSeq" id="WP_011103532.1">
    <property type="nucleotide sequence ID" value="NC_004578.1"/>
</dbReference>
<dbReference type="STRING" id="223283.PSPTO_1377"/>
<dbReference type="TCDB" id="1.B.165.1.2">
    <property type="family name" value="the avre/dspe porin (a/d-p) family"/>
</dbReference>
<dbReference type="GeneID" id="1183013"/>
<dbReference type="KEGG" id="pst:PSPTO_1377"/>
<dbReference type="PATRIC" id="fig|223283.9.peg.1399"/>
<dbReference type="eggNOG" id="ENOG502Z93I">
    <property type="taxonomic scope" value="Bacteria"/>
</dbReference>
<dbReference type="HOGENOM" id="CLU_002571_0_0_6"/>
<dbReference type="OrthoDB" id="6722206at2"/>
<dbReference type="PHI-base" id="PHI:6377"/>
<dbReference type="Proteomes" id="UP000002515">
    <property type="component" value="Chromosome"/>
</dbReference>
<dbReference type="GO" id="GO:0005576">
    <property type="term" value="C:extracellular region"/>
    <property type="evidence" value="ECO:0007669"/>
    <property type="project" value="UniProtKB-SubCell"/>
</dbReference>
<dbReference type="GO" id="GO:0043657">
    <property type="term" value="C:host cell"/>
    <property type="evidence" value="ECO:0007669"/>
    <property type="project" value="UniProtKB-SubCell"/>
</dbReference>
<dbReference type="GO" id="GO:0020002">
    <property type="term" value="C:host cell plasma membrane"/>
    <property type="evidence" value="ECO:0007669"/>
    <property type="project" value="UniProtKB-SubCell"/>
</dbReference>
<dbReference type="GO" id="GO:0016020">
    <property type="term" value="C:membrane"/>
    <property type="evidence" value="ECO:0007669"/>
    <property type="project" value="UniProtKB-KW"/>
</dbReference>
<dbReference type="InterPro" id="IPR021085">
    <property type="entry name" value="AvrE_T3Es"/>
</dbReference>
<dbReference type="Pfam" id="PF11725">
    <property type="entry name" value="AvrE_T3Es"/>
    <property type="match status" value="1"/>
</dbReference>
<comment type="function">
    <text evidence="6">Major virulence factor that may function as a water- and solute-permeable channel dedicated to creating osmotic/water potential perturbation and a water- and nutrient-rich apoplast in which bacteria multiply within the infected plant tissues (PubMed:37704725). Expression in Xenopus oocytes results in inward and outward currents, permeability to water and osmolarity-dependent oocyte swelling and bursting (PubMed:37704725).</text>
</comment>
<comment type="function">
    <text evidence="2 4">Elicits cell death in host tomato leaves and in non-host Nicotiana tabacum leaves (PubMed:16529372). Acts within plant cells and promotes lesion formation (PubMed:16529372). The combined action of AvrE and HopM1 is particularly important in promoting bacterial growth in plants (PubMed:16529372). Contributes to the down-regulation of a specific subset of A.thaliana genes during infection, including NHL13, which is required for antibacterial immunity (PubMed:26206852).</text>
</comment>
<comment type="activity regulation">
    <text evidence="6">Polyamidoamine dendrimers inhibit channel and virulence activities.</text>
</comment>
<comment type="subunit">
    <text evidence="5">In planta interaction assays, interacts with the A.thaliana protein phosphatase 2A (PP2A) via direct interaction/association with specific B' regulatory subunits.</text>
</comment>
<comment type="subcellular location">
    <subcellularLocation>
        <location evidence="2 4">Secreted</location>
    </subcellularLocation>
    <subcellularLocation>
        <location evidence="2">Host cell</location>
    </subcellularLocation>
    <subcellularLocation>
        <location evidence="4 5">Host cell membrane</location>
    </subcellularLocation>
    <text evidence="2 4 5">Secreted via the Hrp type III secretion system (T3SS) (PubMed:16529372). Translocated into the plant cells (PubMed:16529372, PubMed:26206852, PubMed:27191168). Localizes in the plasma membrane and plasma membrane-associated vesicle-like structures in the plant cell (PubMed:26206852, PubMed:27191168).</text>
</comment>
<comment type="domain">
    <text evidence="3 4">Contains two functional domains, one in the N-terminal one-half and the other in the C-terminal one-half, which may physically interact in vivo and are both required for full activity (PubMed:26206852). Contains two WxxxE conserved motifs and a predicted C-terminal endoplasmic reticulum membrane retention/retrieval signal (ERMRS), which is present in most AvrE family proteins (PubMed:19445595). The WxxxE and ERMRS motifs are required for AvrE-mediated virulence in P.syringae pv. tomato (PubMed:19445595). The N-terminal domain contains a plasma membrane-targeting signal that could drive the entire protein to the host plasma membrane (PubMed:26206852).</text>
</comment>
<comment type="disruption phenotype">
    <text evidence="2">The deletion mutant is reduced in its ability to produce lesions but not in its ability to grow in host tomato leaves (PubMed:16529372). The double deletion mutant avrE-hopM1 is strongly impaired in its ability to produce lesions and grow in susceptible host tomato leaves (PubMed:16529372). The double mutant is also impaired in its ability to elicit the hypersensitive response (HR) in non-host N.benthamiana leaves (PubMed:16529372).</text>
</comment>
<comment type="miscellaneous">
    <text evidence="2">In P.syringae, AvrE is functionally redundant to another effector protein, HopM1 (PubMed:16529372). Mutation of either avrE or hopM1 alone does not strongly affect P.syringae strain DC3000 virulence, but the avrE-hopM1 double mutant is severely impaired in virulence (PubMed:16529372).</text>
</comment>
<comment type="similarity">
    <text evidence="10">Belongs to the AvrE family.</text>
</comment>
<name>AVRE_PSESM</name>